<accession>B3PXW5</accession>
<comment type="similarity">
    <text evidence="3">Belongs to the UPF0758 family.</text>
</comment>
<reference key="1">
    <citation type="journal article" date="2010" name="Appl. Environ. Microbiol.">
        <title>Conserved symbiotic plasmid DNA sequences in the multireplicon pangenomic structure of Rhizobium etli.</title>
        <authorList>
            <person name="Gonzalez V."/>
            <person name="Acosta J.L."/>
            <person name="Santamaria R.I."/>
            <person name="Bustos P."/>
            <person name="Fernandez J.L."/>
            <person name="Hernandez Gonzalez I.L."/>
            <person name="Diaz R."/>
            <person name="Flores M."/>
            <person name="Palacios R."/>
            <person name="Mora J."/>
            <person name="Davila G."/>
        </authorList>
    </citation>
    <scope>NUCLEOTIDE SEQUENCE [LARGE SCALE GENOMIC DNA]</scope>
    <source>
        <strain>CIAT 652</strain>
    </source>
</reference>
<protein>
    <recommendedName>
        <fullName>UPF0758 protein RHECIAT_CH0001935</fullName>
    </recommendedName>
</protein>
<organism>
    <name type="scientific">Rhizobium etli (strain CIAT 652)</name>
    <dbReference type="NCBI Taxonomy" id="491916"/>
    <lineage>
        <taxon>Bacteria</taxon>
        <taxon>Pseudomonadati</taxon>
        <taxon>Pseudomonadota</taxon>
        <taxon>Alphaproteobacteria</taxon>
        <taxon>Hyphomicrobiales</taxon>
        <taxon>Rhizobiaceae</taxon>
        <taxon>Rhizobium/Agrobacterium group</taxon>
        <taxon>Rhizobium</taxon>
    </lineage>
</organism>
<evidence type="ECO:0000255" key="1">
    <source>
        <dbReference type="PROSITE-ProRule" id="PRU01182"/>
    </source>
</evidence>
<evidence type="ECO:0000256" key="2">
    <source>
        <dbReference type="SAM" id="MobiDB-lite"/>
    </source>
</evidence>
<evidence type="ECO:0000305" key="3"/>
<gene>
    <name type="ordered locus">RHECIAT_CH0001935</name>
</gene>
<feature type="chain" id="PRO_1000116362" description="UPF0758 protein RHECIAT_CH0001935">
    <location>
        <begin position="1"/>
        <end position="274"/>
    </location>
</feature>
<feature type="domain" description="MPN" evidence="1">
    <location>
        <begin position="152"/>
        <end position="274"/>
    </location>
</feature>
<feature type="region of interest" description="Disordered" evidence="2">
    <location>
        <begin position="1"/>
        <end position="57"/>
    </location>
</feature>
<feature type="short sequence motif" description="JAMM motif" evidence="1">
    <location>
        <begin position="223"/>
        <end position="236"/>
    </location>
</feature>
<feature type="binding site" evidence="1">
    <location>
        <position position="223"/>
    </location>
    <ligand>
        <name>Zn(2+)</name>
        <dbReference type="ChEBI" id="CHEBI:29105"/>
        <note>catalytic</note>
    </ligand>
</feature>
<feature type="binding site" evidence="1">
    <location>
        <position position="225"/>
    </location>
    <ligand>
        <name>Zn(2+)</name>
        <dbReference type="ChEBI" id="CHEBI:29105"/>
        <note>catalytic</note>
    </ligand>
</feature>
<feature type="binding site" evidence="1">
    <location>
        <position position="236"/>
    </location>
    <ligand>
        <name>Zn(2+)</name>
        <dbReference type="ChEBI" id="CHEBI:29105"/>
        <note>catalytic</note>
    </ligand>
</feature>
<name>Y1935_RHIE6</name>
<proteinExistence type="inferred from homology"/>
<dbReference type="EMBL" id="CP001074">
    <property type="protein sequence ID" value="ACE90901.1"/>
    <property type="molecule type" value="Genomic_DNA"/>
</dbReference>
<dbReference type="SMR" id="B3PXW5"/>
<dbReference type="KEGG" id="rec:RHECIAT_CH0001935"/>
<dbReference type="eggNOG" id="COG2003">
    <property type="taxonomic scope" value="Bacteria"/>
</dbReference>
<dbReference type="HOGENOM" id="CLU_073529_0_0_5"/>
<dbReference type="Proteomes" id="UP000008817">
    <property type="component" value="Chromosome"/>
</dbReference>
<dbReference type="GO" id="GO:0046872">
    <property type="term" value="F:metal ion binding"/>
    <property type="evidence" value="ECO:0007669"/>
    <property type="project" value="UniProtKB-KW"/>
</dbReference>
<dbReference type="GO" id="GO:0008237">
    <property type="term" value="F:metallopeptidase activity"/>
    <property type="evidence" value="ECO:0007669"/>
    <property type="project" value="UniProtKB-KW"/>
</dbReference>
<dbReference type="GO" id="GO:0006508">
    <property type="term" value="P:proteolysis"/>
    <property type="evidence" value="ECO:0007669"/>
    <property type="project" value="UniProtKB-KW"/>
</dbReference>
<dbReference type="CDD" id="cd08071">
    <property type="entry name" value="MPN_DUF2466"/>
    <property type="match status" value="1"/>
</dbReference>
<dbReference type="Gene3D" id="1.10.150.20">
    <property type="entry name" value="5' to 3' exonuclease, C-terminal subdomain"/>
    <property type="match status" value="1"/>
</dbReference>
<dbReference type="Gene3D" id="3.40.140.10">
    <property type="entry name" value="Cytidine Deaminase, domain 2"/>
    <property type="match status" value="1"/>
</dbReference>
<dbReference type="InterPro" id="IPR037518">
    <property type="entry name" value="MPN"/>
</dbReference>
<dbReference type="InterPro" id="IPR025657">
    <property type="entry name" value="RadC_JAB"/>
</dbReference>
<dbReference type="InterPro" id="IPR010994">
    <property type="entry name" value="RuvA_2-like"/>
</dbReference>
<dbReference type="InterPro" id="IPR001405">
    <property type="entry name" value="UPF0758"/>
</dbReference>
<dbReference type="InterPro" id="IPR020891">
    <property type="entry name" value="UPF0758_CS"/>
</dbReference>
<dbReference type="NCBIfam" id="NF000642">
    <property type="entry name" value="PRK00024.1"/>
    <property type="match status" value="1"/>
</dbReference>
<dbReference type="NCBIfam" id="TIGR00608">
    <property type="entry name" value="radc"/>
    <property type="match status" value="1"/>
</dbReference>
<dbReference type="PANTHER" id="PTHR30471">
    <property type="entry name" value="DNA REPAIR PROTEIN RADC"/>
    <property type="match status" value="1"/>
</dbReference>
<dbReference type="PANTHER" id="PTHR30471:SF3">
    <property type="entry name" value="UPF0758 PROTEIN YEES-RELATED"/>
    <property type="match status" value="1"/>
</dbReference>
<dbReference type="Pfam" id="PF04002">
    <property type="entry name" value="RadC"/>
    <property type="match status" value="1"/>
</dbReference>
<dbReference type="SUPFAM" id="SSF102712">
    <property type="entry name" value="JAB1/MPN domain"/>
    <property type="match status" value="1"/>
</dbReference>
<dbReference type="SUPFAM" id="SSF47781">
    <property type="entry name" value="RuvA domain 2-like"/>
    <property type="match status" value="1"/>
</dbReference>
<dbReference type="PROSITE" id="PS50249">
    <property type="entry name" value="MPN"/>
    <property type="match status" value="1"/>
</dbReference>
<dbReference type="PROSITE" id="PS01302">
    <property type="entry name" value="UPF0758"/>
    <property type="match status" value="1"/>
</dbReference>
<sequence length="274" mass="30174">MAKRPAATSSNDELPFATEEPVADERSFFGGRPQNPTAPNARAALPASLSGPEHYHGHRERLRDRFREQGDTALADYEILELLLFRLIPRRDTKPIAKALIDRFGSLSGVFGAPAGLLTEVKGVGENVALDLKLISTVAHRTLKSEIRSKQVLSSWSSVIQYCHAAMAHETREQFRILFLDKRNVLIADEVQGRGTVDHTPVYPREVVKRALELSATAIILVHNHPSGDPTPSRADIDMTKVIIEAAKALDITVHDHIIIGKDGHVSLKGLKLI</sequence>
<keyword id="KW-0378">Hydrolase</keyword>
<keyword id="KW-0479">Metal-binding</keyword>
<keyword id="KW-0482">Metalloprotease</keyword>
<keyword id="KW-0645">Protease</keyword>
<keyword id="KW-0862">Zinc</keyword>